<organism>
    <name type="scientific">Pelargonium hortorum</name>
    <name type="common">Common geranium</name>
    <name type="synonym">Pelargonium inquinans x Pelargonium zonale</name>
    <dbReference type="NCBI Taxonomy" id="4031"/>
    <lineage>
        <taxon>Eukaryota</taxon>
        <taxon>Viridiplantae</taxon>
        <taxon>Streptophyta</taxon>
        <taxon>Embryophyta</taxon>
        <taxon>Tracheophyta</taxon>
        <taxon>Spermatophyta</taxon>
        <taxon>Magnoliopsida</taxon>
        <taxon>eudicotyledons</taxon>
        <taxon>Gunneridae</taxon>
        <taxon>Pentapetalae</taxon>
        <taxon>rosids</taxon>
        <taxon>malvids</taxon>
        <taxon>Geraniales</taxon>
        <taxon>Geraniaceae</taxon>
        <taxon>Pelargonium</taxon>
    </lineage>
</organism>
<keyword id="KW-0150">Chloroplast</keyword>
<keyword id="KW-0175">Coiled coil</keyword>
<keyword id="KW-0472">Membrane</keyword>
<keyword id="KW-0934">Plastid</keyword>
<keyword id="KW-1001">Plastid inner membrane</keyword>
<keyword id="KW-0653">Protein transport</keyword>
<keyword id="KW-0812">Transmembrane</keyword>
<keyword id="KW-1133">Transmembrane helix</keyword>
<keyword id="KW-0813">Transport</keyword>
<name>TI214_PELHO</name>
<evidence type="ECO:0000250" key="1">
    <source>
        <dbReference type="UniProtKB" id="P56785"/>
    </source>
</evidence>
<evidence type="ECO:0000255" key="2"/>
<evidence type="ECO:0000256" key="3">
    <source>
        <dbReference type="SAM" id="MobiDB-lite"/>
    </source>
</evidence>
<evidence type="ECO:0000305" key="4"/>
<accession>Q06FP6</accession>
<feature type="chain" id="PRO_0000262621" description="Protein TIC 214">
    <location>
        <begin position="1"/>
        <end position="2552"/>
    </location>
</feature>
<feature type="transmembrane region" description="Helical" evidence="2">
    <location>
        <begin position="15"/>
        <end position="35"/>
    </location>
</feature>
<feature type="transmembrane region" description="Helical" evidence="2">
    <location>
        <begin position="54"/>
        <end position="74"/>
    </location>
</feature>
<feature type="transmembrane region" description="Helical" evidence="2">
    <location>
        <begin position="78"/>
        <end position="98"/>
    </location>
</feature>
<feature type="transmembrane region" description="Helical" evidence="2">
    <location>
        <begin position="119"/>
        <end position="136"/>
    </location>
</feature>
<feature type="transmembrane region" description="Helical" evidence="2">
    <location>
        <begin position="154"/>
        <end position="174"/>
    </location>
</feature>
<feature type="transmembrane region" description="Helical" evidence="2">
    <location>
        <begin position="243"/>
        <end position="263"/>
    </location>
</feature>
<feature type="transmembrane region" description="Helical" evidence="2">
    <location>
        <begin position="362"/>
        <end position="382"/>
    </location>
</feature>
<feature type="transmembrane region" description="Helical" evidence="2">
    <location>
        <begin position="423"/>
        <end position="443"/>
    </location>
</feature>
<feature type="transmembrane region" description="Helical" evidence="2">
    <location>
        <begin position="452"/>
        <end position="472"/>
    </location>
</feature>
<feature type="region of interest" description="Disordered" evidence="3">
    <location>
        <begin position="304"/>
        <end position="325"/>
    </location>
</feature>
<feature type="region of interest" description="Disordered" evidence="3">
    <location>
        <begin position="2045"/>
        <end position="2077"/>
    </location>
</feature>
<feature type="coiled-coil region" evidence="2">
    <location>
        <begin position="2416"/>
        <end position="2511"/>
    </location>
</feature>
<feature type="compositionally biased region" description="Basic and acidic residues" evidence="3">
    <location>
        <begin position="305"/>
        <end position="322"/>
    </location>
</feature>
<proteinExistence type="inferred from homology"/>
<gene>
    <name evidence="1" type="primary">TIC214</name>
    <name type="synonym">ycf1-A</name>
</gene>
<gene>
    <name evidence="1" type="primary">TIC214</name>
    <name type="synonym">ycf1-B</name>
</gene>
<geneLocation type="chloroplast"/>
<protein>
    <recommendedName>
        <fullName evidence="1">Protein TIC 214</fullName>
    </recommendedName>
    <alternativeName>
        <fullName evidence="1">Translocon at the inner envelope membrane of chloroplasts 214</fullName>
        <shortName evidence="1">AtTIC214</shortName>
    </alternativeName>
</protein>
<reference key="1">
    <citation type="journal article" date="2006" name="Mol. Biol. Evol.">
        <title>The complete chloroplast genome sequence of Pelargonium x hortorum: organization and evolution of the largest and most highly rearranged chloroplast genome of land plants.</title>
        <authorList>
            <person name="Chumley T.W."/>
            <person name="Palmer J.D."/>
            <person name="Mower J.P."/>
            <person name="Fourcade H.M."/>
            <person name="Calie P.J."/>
            <person name="Boore J.L."/>
            <person name="Jansen R.K."/>
        </authorList>
    </citation>
    <scope>NUCLEOTIDE SEQUENCE [LARGE SCALE GENOMIC DNA]</scope>
    <source>
        <strain>cv. Ringo White</strain>
    </source>
</reference>
<comment type="function">
    <text evidence="1">Involved in protein precursor import into chloroplasts. May be part of an intermediate translocation complex acting as a protein-conducting channel at the inner envelope.</text>
</comment>
<comment type="subunit">
    <text evidence="1">Part of the Tic complex.</text>
</comment>
<comment type="subcellular location">
    <subcellularLocation>
        <location evidence="1">Plastid</location>
        <location evidence="1">Chloroplast inner membrane</location>
        <topology evidence="2">Multi-pass membrane protein</topology>
    </subcellularLocation>
</comment>
<comment type="similarity">
    <text evidence="4">Belongs to the TIC214 family.</text>
</comment>
<dbReference type="EMBL" id="DQ897681">
    <property type="protein sequence ID" value="ABI17313.1"/>
    <property type="molecule type" value="Genomic_DNA"/>
</dbReference>
<dbReference type="EMBL" id="DQ897681">
    <property type="protein sequence ID" value="ABI17326.1"/>
    <property type="molecule type" value="Genomic_DNA"/>
</dbReference>
<dbReference type="SMR" id="Q06FP6"/>
<dbReference type="GO" id="GO:0009706">
    <property type="term" value="C:chloroplast inner membrane"/>
    <property type="evidence" value="ECO:0007669"/>
    <property type="project" value="UniProtKB-SubCell"/>
</dbReference>
<dbReference type="GO" id="GO:0015031">
    <property type="term" value="P:protein transport"/>
    <property type="evidence" value="ECO:0007669"/>
    <property type="project" value="UniProtKB-KW"/>
</dbReference>
<dbReference type="InterPro" id="IPR008896">
    <property type="entry name" value="TIC214"/>
</dbReference>
<dbReference type="PANTHER" id="PTHR33163:SF40">
    <property type="entry name" value="PROTEIN TIC 214"/>
    <property type="match status" value="1"/>
</dbReference>
<dbReference type="PANTHER" id="PTHR33163">
    <property type="entry name" value="PROTEIN TIC 214-RELATED"/>
    <property type="match status" value="1"/>
</dbReference>
<dbReference type="Pfam" id="PF05758">
    <property type="entry name" value="Ycf1"/>
    <property type="match status" value="4"/>
</dbReference>
<sequence length="2552" mass="308172">MNHITSKRLDIRATLIFGIFYGILITFSKLTSYLFLIRHWISQDDEGTGKARALSYGFTVGHLLGYLLIYYLPFYKALSNFYLKIILALGLMLYQFFWTNHHLDIFLPKSFSTPQRDQTLAFVYGLSYRLLNYTFFPNSIFSRMIVGYLVQCQFKILFLYTTFFVWMIGHLICIKWVQFLTLWLQKNYSAFLILTHQLYLQDKIKKIRSRTIPIAKIFEYKPDPVMKPGIYRESQTIDEMIQILATILFIVALYLLGKSPIPFVPHSPSAPNAVELARMSRLEEEAKVQREIEDRFYPLEDFDEEQKKDEKSADEEKKRAVEEENQEILDLEEEENQEILDLEEEENQEILDMDEEKGFENTLYTFFSDCFFESFSFYAFLFNRLKFYSGYLFNRLKFCYGYLFDLFSSSSRFLNRIEPLFSPFLVVVKPFYLYFFNFFSVYIPHLKFLKWFLFNHNFVFSAIFRGFSHFFFNPRRWVIPYRYIKTSFYEYSVKKGGFSQFCFYKCQSDGKERTSFTYPLSLITFYKMIEGKLSLFRKKKRLPDRDRLYTLWVLRNAKKKDSLNKELIKRVQKLKSGSPLRDVLDIRRKLFQFKYTPKVLRSISETLFDQMHPSGGKKRENDPVWDGPSRGAFWYNHKLTKTAAEQRVDEEEHLQTMWLFFKDLRPLNQKEQYLILERQKLERESQEKQKLRRQCFEKSLLGKTLRILQKMAPYFRAPQYIPSNSMSRAFKLYRVSAYLTLDWQETTRILRRVHKLRKRGMIIRVNEERESWIRSHKERYLKLKEIRKKRVQLEKEKRRPKKILLRLDKKTKKGTLKKKQKEAFPLNTILTRILVLNSHFRTSSKRKRDSKDRRNLYSYPNPLLEKINKIRRNRNTVYHIMNTYYEGRSGFTHEDIPKMRKKYQKYRQFQLKLRTIMKEVPRWGYNIDDEKIDYSDYNIRNDDVVAEDVYLRTRKAKFRVFRTKVWKYYERHDKRELKQWYFYRYAKITHFRRNMVKGADRTQRRKVTICGWYEHRVQSPLFLPKRRKTLILIMLTLDVFELMKKCYRFLRQDSRFQVRVKRISERINRIWKKLWNLPDSQKSAIEAAIEAENELQGLRESEEDKKKRQERGDALEEWQERREAHEIRAICIAETWELLQSGHAVRSLILLIQSFLRKNVIFPFLIIAKNMARILFFQSPELFQDFADLKKETHTLCDFGGIPLDESQDPIGWFTDGCQIRIHFPFEWKPWRETEQSKESSVAEDLYLTVFGRITNIPFGTARKPYPFFKTVFEELKKKKASQELKNLLTSGIRKLQKKGFLKFKKKGFLRKRLLAFQKKSFQSKLLKGVKVKKRTNLKKGPQSKLTKKKKERKVDKTRAIINEIERVLKEKKKRLFIIQTSISSTKTSSHSKTSEALRRLSKILKRRKARFIRKSTIFRKWIIEWIYVKILFDLKNRFDLKKRFLDEMNKKKSCLKMVAQFFFQFKKKRKNKKIDKAIKGINKKKRKKNRFISTIKKHSFNMRNSQISKSQKTLVFDLSSLSQAYVFYKLSQTEKSSFRVSKFQNLRNCRVGMNRWKEWLRGHFDYYLLSDIRWSRLEAQKWRNKMNQCRTAENHNFKKGDSYEIDSLPINPQKLKFKKHLRYDLLAYSFLNAEYKKDPYVIAPSLVSNNQTAISHLYNIHKESLVNMLTSNYKHLRDSKEKHPLLDMHMDVNRTALRRRMNYNQILFHVEDKKKGSKVVDKVAIDSWVTGQNRVLPAGSLTEDRVGFTEGAMVFLESVLKQLRERRRPYPESLDESFRPEWLKWPLEHLIGYIHKICDMHLYFFSVYALYWPEFYDRHRLAKLGCVFRYEKCYDKRRTPIWKKQKSMAKRKKDLAARKKKMSGKAQSIKIAQREFDLSLILEPEEFEKIEKKNFFDWMGLNNENELEELMERNNDEKKSSFLESSFFLFPEFIQLYNLLNLYAKAEWTTPIHSFLQNGKIRSRSSYADLKVEFDSFNWYMYDKKEWPAKGRPLWDSNRARRRRRHRRALLNLGRKDPRKETTLDIMIDPTERERAYAETISEMKAEEQKKIDEEYEEKKEKRKKEQEEQGKAFDETSYRKNHKKRFARVSTLKPIKYSRFRKTALKDLKKSNYFRYQVHYSLRYLIADFLTNVTRTSQVTNKATNPKLLLVFIKDLIEMSQFGIMGTTQNQLPTLEDILNMGYLVLNPIRTFKRLRWEHVTYQILAISLLHKNQFQKLAYTPGPDNKRDPCLEIGVNKVKQTTYKVRKGRKVVESLSVRRLRVKRWWGLRVSYGKFGCPRSFWTKLVRYLVHPFAIPLKAKARGKKKQSPWSYERVFGLFHWKPEVHPKKKRKRTPWSYERVFGQFHADQMRFFYKIGVCGKFKRECTAILLSLITDPKRANDRIKKLILLDEGVPDTLVEKGLLVPENLLSPRRRRQLRIVNELNKKKKKEKRIPQHKLTPYNKLLKETGRMDLNLLLRELDEREKRQREERLNLVQKKEREQEELRKKEEESKELNRIKKKLMRLRFFLWPNYRLEDLACMNRYWFDTTNGSRFSMLRIRVYPRLKTR</sequence>